<proteinExistence type="inferred from homology"/>
<comment type="function">
    <text evidence="1">Catalyzes the NAD-dependent reduction of succinylglutamate semialdehyde into succinylglutamate.</text>
</comment>
<comment type="catalytic activity">
    <reaction evidence="1">
        <text>N-succinyl-L-glutamate 5-semialdehyde + NAD(+) + H2O = N-succinyl-L-glutamate + NADH + 2 H(+)</text>
        <dbReference type="Rhea" id="RHEA:10812"/>
        <dbReference type="ChEBI" id="CHEBI:15377"/>
        <dbReference type="ChEBI" id="CHEBI:15378"/>
        <dbReference type="ChEBI" id="CHEBI:57540"/>
        <dbReference type="ChEBI" id="CHEBI:57945"/>
        <dbReference type="ChEBI" id="CHEBI:58520"/>
        <dbReference type="ChEBI" id="CHEBI:58763"/>
        <dbReference type="EC" id="1.2.1.71"/>
    </reaction>
</comment>
<comment type="pathway">
    <text evidence="1">Amino-acid degradation; L-arginine degradation via AST pathway; L-glutamate and succinate from L-arginine: step 4/5.</text>
</comment>
<comment type="similarity">
    <text evidence="1">Belongs to the aldehyde dehydrogenase family. AstD subfamily.</text>
</comment>
<organism>
    <name type="scientific">Shewanella piezotolerans (strain WP3 / JCM 13877)</name>
    <dbReference type="NCBI Taxonomy" id="225849"/>
    <lineage>
        <taxon>Bacteria</taxon>
        <taxon>Pseudomonadati</taxon>
        <taxon>Pseudomonadota</taxon>
        <taxon>Gammaproteobacteria</taxon>
        <taxon>Alteromonadales</taxon>
        <taxon>Shewanellaceae</taxon>
        <taxon>Shewanella</taxon>
    </lineage>
</organism>
<feature type="chain" id="PRO_1000138061" description="N-succinylglutamate 5-semialdehyde dehydrogenase">
    <location>
        <begin position="1"/>
        <end position="486"/>
    </location>
</feature>
<feature type="active site" evidence="1">
    <location>
        <position position="243"/>
    </location>
</feature>
<feature type="active site" evidence="1">
    <location>
        <position position="277"/>
    </location>
</feature>
<feature type="binding site" evidence="1">
    <location>
        <begin position="220"/>
        <end position="225"/>
    </location>
    <ligand>
        <name>NAD(+)</name>
        <dbReference type="ChEBI" id="CHEBI:57540"/>
    </ligand>
</feature>
<gene>
    <name evidence="1" type="primary">astD</name>
    <name type="ordered locus">swp_0749</name>
</gene>
<keyword id="KW-0056">Arginine metabolism</keyword>
<keyword id="KW-0520">NAD</keyword>
<keyword id="KW-0560">Oxidoreductase</keyword>
<reference key="1">
    <citation type="journal article" date="2008" name="PLoS ONE">
        <title>Environmental adaptation: genomic analysis of the piezotolerant and psychrotolerant deep-sea iron reducing bacterium Shewanella piezotolerans WP3.</title>
        <authorList>
            <person name="Wang F."/>
            <person name="Wang J."/>
            <person name="Jian H."/>
            <person name="Zhang B."/>
            <person name="Li S."/>
            <person name="Wang F."/>
            <person name="Zeng X."/>
            <person name="Gao L."/>
            <person name="Bartlett D.H."/>
            <person name="Yu J."/>
            <person name="Hu S."/>
            <person name="Xiao X."/>
        </authorList>
    </citation>
    <scope>NUCLEOTIDE SEQUENCE [LARGE SCALE GENOMIC DNA]</scope>
    <source>
        <strain>WP3 / JCM 13877</strain>
    </source>
</reference>
<name>ASTD_SHEPW</name>
<evidence type="ECO:0000255" key="1">
    <source>
        <dbReference type="HAMAP-Rule" id="MF_01174"/>
    </source>
</evidence>
<dbReference type="EC" id="1.2.1.71" evidence="1"/>
<dbReference type="EMBL" id="CP000472">
    <property type="protein sequence ID" value="ACJ27562.1"/>
    <property type="molecule type" value="Genomic_DNA"/>
</dbReference>
<dbReference type="RefSeq" id="WP_020910942.1">
    <property type="nucleotide sequence ID" value="NC_011566.1"/>
</dbReference>
<dbReference type="SMR" id="B8CIT6"/>
<dbReference type="STRING" id="225849.swp_0749"/>
<dbReference type="KEGG" id="swp:swp_0749"/>
<dbReference type="eggNOG" id="COG1012">
    <property type="taxonomic scope" value="Bacteria"/>
</dbReference>
<dbReference type="HOGENOM" id="CLU_005391_1_0_6"/>
<dbReference type="OrthoDB" id="9812625at2"/>
<dbReference type="UniPathway" id="UPA00185">
    <property type="reaction ID" value="UER00282"/>
</dbReference>
<dbReference type="Proteomes" id="UP000000753">
    <property type="component" value="Chromosome"/>
</dbReference>
<dbReference type="GO" id="GO:0043824">
    <property type="term" value="F:succinylglutamate-semialdehyde dehydrogenase activity"/>
    <property type="evidence" value="ECO:0007669"/>
    <property type="project" value="UniProtKB-EC"/>
</dbReference>
<dbReference type="GO" id="GO:0019544">
    <property type="term" value="P:arginine catabolic process to glutamate"/>
    <property type="evidence" value="ECO:0007669"/>
    <property type="project" value="UniProtKB-UniRule"/>
</dbReference>
<dbReference type="GO" id="GO:0019545">
    <property type="term" value="P:arginine catabolic process to succinate"/>
    <property type="evidence" value="ECO:0007669"/>
    <property type="project" value="UniProtKB-UniRule"/>
</dbReference>
<dbReference type="CDD" id="cd07095">
    <property type="entry name" value="ALDH_SGSD_AstD"/>
    <property type="match status" value="1"/>
</dbReference>
<dbReference type="FunFam" id="3.40.309.10:FF:000013">
    <property type="entry name" value="N-succinylglutamate 5-semialdehyde dehydrogenase"/>
    <property type="match status" value="1"/>
</dbReference>
<dbReference type="FunFam" id="3.40.605.10:FF:000010">
    <property type="entry name" value="N-succinylglutamate 5-semialdehyde dehydrogenase"/>
    <property type="match status" value="1"/>
</dbReference>
<dbReference type="Gene3D" id="3.40.605.10">
    <property type="entry name" value="Aldehyde Dehydrogenase, Chain A, domain 1"/>
    <property type="match status" value="1"/>
</dbReference>
<dbReference type="Gene3D" id="3.40.309.10">
    <property type="entry name" value="Aldehyde Dehydrogenase, Chain A, domain 2"/>
    <property type="match status" value="1"/>
</dbReference>
<dbReference type="HAMAP" id="MF_01174">
    <property type="entry name" value="Aldedh_AstD"/>
    <property type="match status" value="1"/>
</dbReference>
<dbReference type="InterPro" id="IPR016161">
    <property type="entry name" value="Ald_DH/histidinol_DH"/>
</dbReference>
<dbReference type="InterPro" id="IPR016163">
    <property type="entry name" value="Ald_DH_C"/>
</dbReference>
<dbReference type="InterPro" id="IPR016160">
    <property type="entry name" value="Ald_DH_CS_CYS"/>
</dbReference>
<dbReference type="InterPro" id="IPR029510">
    <property type="entry name" value="Ald_DH_CS_GLU"/>
</dbReference>
<dbReference type="InterPro" id="IPR016162">
    <property type="entry name" value="Ald_DH_N"/>
</dbReference>
<dbReference type="InterPro" id="IPR015590">
    <property type="entry name" value="Aldehyde_DH_dom"/>
</dbReference>
<dbReference type="InterPro" id="IPR017649">
    <property type="entry name" value="SuccinylGlu_semiald_DH_AstD"/>
</dbReference>
<dbReference type="NCBIfam" id="TIGR03240">
    <property type="entry name" value="arg_catab_astD"/>
    <property type="match status" value="1"/>
</dbReference>
<dbReference type="NCBIfam" id="NF006992">
    <property type="entry name" value="PRK09457.1"/>
    <property type="match status" value="1"/>
</dbReference>
<dbReference type="PANTHER" id="PTHR11699">
    <property type="entry name" value="ALDEHYDE DEHYDROGENASE-RELATED"/>
    <property type="match status" value="1"/>
</dbReference>
<dbReference type="Pfam" id="PF00171">
    <property type="entry name" value="Aldedh"/>
    <property type="match status" value="1"/>
</dbReference>
<dbReference type="SUPFAM" id="SSF53720">
    <property type="entry name" value="ALDH-like"/>
    <property type="match status" value="1"/>
</dbReference>
<dbReference type="PROSITE" id="PS00070">
    <property type="entry name" value="ALDEHYDE_DEHYDR_CYS"/>
    <property type="match status" value="1"/>
</dbReference>
<dbReference type="PROSITE" id="PS00687">
    <property type="entry name" value="ALDEHYDE_DEHYDR_GLU"/>
    <property type="match status" value="1"/>
</dbReference>
<protein>
    <recommendedName>
        <fullName evidence="1">N-succinylglutamate 5-semialdehyde dehydrogenase</fullName>
        <ecNumber evidence="1">1.2.1.71</ecNumber>
    </recommendedName>
    <alternativeName>
        <fullName evidence="1">Succinylglutamic semialdehyde dehydrogenase</fullName>
        <shortName evidence="1">SGSD</shortName>
    </alternativeName>
</protein>
<accession>B8CIT6</accession>
<sequence length="486" mass="51685">MTQFIEGKWTAGLGHEVTSINPANQEVIWNSKTATPEQVNTAVDAARNAQFDWFMLGFEARLAIVEAYRDQLEANKAEMAEVIAQETGKPQWETATEAGAMIGKIGLSVAAFHKRTGTSENDTPAGRAVLRHKPHGVVAVFGPYNFPGHLPNGHIVPALLAGNTVVFKPSELTPKVAELMLKLWEKAGLPAGVINLVQGEVETGKALASHPQIDGLFFTGSSRTGHILHQQYAGDPGKILALEMGGNNPLIIKGVEDTKAAVHDIIQSAYISSGQRCTCARRLYVEKGAAGDALLEQLAVAVNNIQVGAWNAQPQPFMGSMISETAAKGMVEAQRNLVNLGATPMVELTHLEAGTGLVSPGLIDVTDVIELPDEEYFGPLLQVVRYSDFDEAIKLANATRYGLSAGILADSREDYDYFLARIRAGIVNWNKQITGASGAAPFGGVGASGNHRASAFYAADYCAYPVASVEADAVSLPAKLSPGLSI</sequence>